<feature type="chain" id="PRO_0000192720" description="Bifunctional uridylyltransferase/uridylyl-removing enzyme">
    <location>
        <begin position="1"/>
        <end position="865"/>
    </location>
</feature>
<feature type="domain" description="HD" evidence="2">
    <location>
        <begin position="437"/>
        <end position="559"/>
    </location>
</feature>
<feature type="domain" description="ACT 1" evidence="1">
    <location>
        <begin position="676"/>
        <end position="762"/>
    </location>
</feature>
<feature type="domain" description="ACT 2" evidence="1">
    <location>
        <begin position="789"/>
        <end position="865"/>
    </location>
</feature>
<feature type="region of interest" description="Uridylyltransferase">
    <location>
        <begin position="1"/>
        <end position="318"/>
    </location>
</feature>
<feature type="region of interest" description="Uridylyl-removing">
    <location>
        <begin position="319"/>
        <end position="675"/>
    </location>
</feature>
<feature type="region of interest" description="Disordered" evidence="3">
    <location>
        <begin position="747"/>
        <end position="767"/>
    </location>
</feature>
<feature type="compositionally biased region" description="Basic residues" evidence="3">
    <location>
        <begin position="751"/>
        <end position="767"/>
    </location>
</feature>
<proteinExistence type="inferred from homology"/>
<name>GLND_BORPE</name>
<protein>
    <recommendedName>
        <fullName evidence="1">Bifunctional uridylyltransferase/uridylyl-removing enzyme</fullName>
        <shortName evidence="1">UTase/UR</shortName>
    </recommendedName>
    <alternativeName>
        <fullName evidence="1">Bifunctional [protein-PII] modification enzyme</fullName>
    </alternativeName>
    <alternativeName>
        <fullName evidence="1">Bifunctional nitrogen sensor protein</fullName>
    </alternativeName>
    <domain>
        <recommendedName>
            <fullName evidence="1">[Protein-PII] uridylyltransferase</fullName>
            <shortName evidence="1">PII uridylyltransferase</shortName>
            <shortName evidence="1">UTase</shortName>
            <ecNumber evidence="1">2.7.7.59</ecNumber>
        </recommendedName>
    </domain>
    <domain>
        <recommendedName>
            <fullName evidence="1">[Protein-PII]-UMP uridylyl-removing enzyme</fullName>
            <shortName evidence="1">UR</shortName>
            <ecNumber evidence="1">3.1.4.-</ecNumber>
        </recommendedName>
    </domain>
</protein>
<organism>
    <name type="scientific">Bordetella pertussis (strain Tohama I / ATCC BAA-589 / NCTC 13251)</name>
    <dbReference type="NCBI Taxonomy" id="257313"/>
    <lineage>
        <taxon>Bacteria</taxon>
        <taxon>Pseudomonadati</taxon>
        <taxon>Pseudomonadota</taxon>
        <taxon>Betaproteobacteria</taxon>
        <taxon>Burkholderiales</taxon>
        <taxon>Alcaligenaceae</taxon>
        <taxon>Bordetella</taxon>
    </lineage>
</organism>
<dbReference type="EC" id="2.7.7.59" evidence="1"/>
<dbReference type="EC" id="3.1.4.-" evidence="1"/>
<dbReference type="EMBL" id="BX640415">
    <property type="protein sequence ID" value="CAE41707.1"/>
    <property type="molecule type" value="Genomic_DNA"/>
</dbReference>
<dbReference type="RefSeq" id="NP_880159.1">
    <property type="nucleotide sequence ID" value="NC_002929.2"/>
</dbReference>
<dbReference type="RefSeq" id="WP_010930348.1">
    <property type="nucleotide sequence ID" value="NZ_CP039022.1"/>
</dbReference>
<dbReference type="SMR" id="Q7VYD2"/>
<dbReference type="STRING" id="257313.BP1417"/>
<dbReference type="PaxDb" id="257313-BP1417"/>
<dbReference type="KEGG" id="bpe:BP1417"/>
<dbReference type="PATRIC" id="fig|257313.5.peg.1519"/>
<dbReference type="eggNOG" id="COG2844">
    <property type="taxonomic scope" value="Bacteria"/>
</dbReference>
<dbReference type="HOGENOM" id="CLU_012833_1_0_4"/>
<dbReference type="Proteomes" id="UP000002676">
    <property type="component" value="Chromosome"/>
</dbReference>
<dbReference type="GO" id="GO:0008773">
    <property type="term" value="F:[protein-PII] uridylyltransferase activity"/>
    <property type="evidence" value="ECO:0007669"/>
    <property type="project" value="UniProtKB-UniRule"/>
</dbReference>
<dbReference type="GO" id="GO:0008081">
    <property type="term" value="F:phosphoric diester hydrolase activity"/>
    <property type="evidence" value="ECO:0007669"/>
    <property type="project" value="UniProtKB-UniRule"/>
</dbReference>
<dbReference type="GO" id="GO:0006808">
    <property type="term" value="P:regulation of nitrogen utilization"/>
    <property type="evidence" value="ECO:0007669"/>
    <property type="project" value="UniProtKB-UniRule"/>
</dbReference>
<dbReference type="CDD" id="cd04899">
    <property type="entry name" value="ACT_ACR-UUR-like_2"/>
    <property type="match status" value="1"/>
</dbReference>
<dbReference type="CDD" id="cd04900">
    <property type="entry name" value="ACT_UUR-like_1"/>
    <property type="match status" value="1"/>
</dbReference>
<dbReference type="CDD" id="cd00077">
    <property type="entry name" value="HDc"/>
    <property type="match status" value="1"/>
</dbReference>
<dbReference type="CDD" id="cd05401">
    <property type="entry name" value="NT_GlnE_GlnD_like"/>
    <property type="match status" value="1"/>
</dbReference>
<dbReference type="Gene3D" id="3.30.70.260">
    <property type="match status" value="1"/>
</dbReference>
<dbReference type="Gene3D" id="1.10.3210.10">
    <property type="entry name" value="Hypothetical protein af1432"/>
    <property type="match status" value="1"/>
</dbReference>
<dbReference type="HAMAP" id="MF_00277">
    <property type="entry name" value="PII_uridylyl_transf"/>
    <property type="match status" value="1"/>
</dbReference>
<dbReference type="InterPro" id="IPR045865">
    <property type="entry name" value="ACT-like_dom_sf"/>
</dbReference>
<dbReference type="InterPro" id="IPR002912">
    <property type="entry name" value="ACT_dom"/>
</dbReference>
<dbReference type="InterPro" id="IPR003607">
    <property type="entry name" value="HD/PDEase_dom"/>
</dbReference>
<dbReference type="InterPro" id="IPR006674">
    <property type="entry name" value="HD_domain"/>
</dbReference>
<dbReference type="InterPro" id="IPR043519">
    <property type="entry name" value="NT_sf"/>
</dbReference>
<dbReference type="InterPro" id="IPR013546">
    <property type="entry name" value="PII_UdlTrfase/GS_AdlTrfase"/>
</dbReference>
<dbReference type="InterPro" id="IPR002934">
    <property type="entry name" value="Polymerase_NTP_transf_dom"/>
</dbReference>
<dbReference type="InterPro" id="IPR010043">
    <property type="entry name" value="UTase/UR"/>
</dbReference>
<dbReference type="NCBIfam" id="NF002837">
    <property type="entry name" value="PRK03059.1"/>
    <property type="match status" value="1"/>
</dbReference>
<dbReference type="NCBIfam" id="TIGR01693">
    <property type="entry name" value="UTase_glnD"/>
    <property type="match status" value="1"/>
</dbReference>
<dbReference type="PANTHER" id="PTHR47320">
    <property type="entry name" value="BIFUNCTIONAL URIDYLYLTRANSFERASE/URIDYLYL-REMOVING ENZYME"/>
    <property type="match status" value="1"/>
</dbReference>
<dbReference type="PANTHER" id="PTHR47320:SF1">
    <property type="entry name" value="BIFUNCTIONAL URIDYLYLTRANSFERASE_URIDYLYL-REMOVING ENZYME"/>
    <property type="match status" value="1"/>
</dbReference>
<dbReference type="Pfam" id="PF01842">
    <property type="entry name" value="ACT"/>
    <property type="match status" value="1"/>
</dbReference>
<dbReference type="Pfam" id="PF08335">
    <property type="entry name" value="GlnD_UR_UTase"/>
    <property type="match status" value="1"/>
</dbReference>
<dbReference type="Pfam" id="PF01966">
    <property type="entry name" value="HD"/>
    <property type="match status" value="1"/>
</dbReference>
<dbReference type="Pfam" id="PF01909">
    <property type="entry name" value="NTP_transf_2"/>
    <property type="match status" value="1"/>
</dbReference>
<dbReference type="PIRSF" id="PIRSF006288">
    <property type="entry name" value="PII_uridyltransf"/>
    <property type="match status" value="1"/>
</dbReference>
<dbReference type="SMART" id="SM00471">
    <property type="entry name" value="HDc"/>
    <property type="match status" value="1"/>
</dbReference>
<dbReference type="SUPFAM" id="SSF55021">
    <property type="entry name" value="ACT-like"/>
    <property type="match status" value="2"/>
</dbReference>
<dbReference type="SUPFAM" id="SSF109604">
    <property type="entry name" value="HD-domain/PDEase-like"/>
    <property type="match status" value="1"/>
</dbReference>
<dbReference type="SUPFAM" id="SSF81301">
    <property type="entry name" value="Nucleotidyltransferase"/>
    <property type="match status" value="1"/>
</dbReference>
<dbReference type="SUPFAM" id="SSF81593">
    <property type="entry name" value="Nucleotidyltransferase substrate binding subunit/domain"/>
    <property type="match status" value="1"/>
</dbReference>
<dbReference type="PROSITE" id="PS51671">
    <property type="entry name" value="ACT"/>
    <property type="match status" value="2"/>
</dbReference>
<dbReference type="PROSITE" id="PS51831">
    <property type="entry name" value="HD"/>
    <property type="match status" value="1"/>
</dbReference>
<reference key="1">
    <citation type="journal article" date="2003" name="Nat. Genet.">
        <title>Comparative analysis of the genome sequences of Bordetella pertussis, Bordetella parapertussis and Bordetella bronchiseptica.</title>
        <authorList>
            <person name="Parkhill J."/>
            <person name="Sebaihia M."/>
            <person name="Preston A."/>
            <person name="Murphy L.D."/>
            <person name="Thomson N.R."/>
            <person name="Harris D.E."/>
            <person name="Holden M.T.G."/>
            <person name="Churcher C.M."/>
            <person name="Bentley S.D."/>
            <person name="Mungall K.L."/>
            <person name="Cerdeno-Tarraga A.-M."/>
            <person name="Temple L."/>
            <person name="James K.D."/>
            <person name="Harris B."/>
            <person name="Quail M.A."/>
            <person name="Achtman M."/>
            <person name="Atkin R."/>
            <person name="Baker S."/>
            <person name="Basham D."/>
            <person name="Bason N."/>
            <person name="Cherevach I."/>
            <person name="Chillingworth T."/>
            <person name="Collins M."/>
            <person name="Cronin A."/>
            <person name="Davis P."/>
            <person name="Doggett J."/>
            <person name="Feltwell T."/>
            <person name="Goble A."/>
            <person name="Hamlin N."/>
            <person name="Hauser H."/>
            <person name="Holroyd S."/>
            <person name="Jagels K."/>
            <person name="Leather S."/>
            <person name="Moule S."/>
            <person name="Norberczak H."/>
            <person name="O'Neil S."/>
            <person name="Ormond D."/>
            <person name="Price C."/>
            <person name="Rabbinowitsch E."/>
            <person name="Rutter S."/>
            <person name="Sanders M."/>
            <person name="Saunders D."/>
            <person name="Seeger K."/>
            <person name="Sharp S."/>
            <person name="Simmonds M."/>
            <person name="Skelton J."/>
            <person name="Squares R."/>
            <person name="Squares S."/>
            <person name="Stevens K."/>
            <person name="Unwin L."/>
            <person name="Whitehead S."/>
            <person name="Barrell B.G."/>
            <person name="Maskell D.J."/>
        </authorList>
    </citation>
    <scope>NUCLEOTIDE SEQUENCE [LARGE SCALE GENOMIC DNA]</scope>
    <source>
        <strain>Tohama I / ATCC BAA-589 / NCTC 13251</strain>
    </source>
</reference>
<comment type="function">
    <text evidence="1">Modifies, by uridylylation and deuridylylation, the PII regulatory proteins (GlnB and homologs), in response to the nitrogen status of the cell that GlnD senses through the glutamine level. Under low glutamine levels, catalyzes the conversion of the PII proteins and UTP to PII-UMP and PPi, while under higher glutamine levels, GlnD hydrolyzes PII-UMP to PII and UMP (deuridylylation). Thus, controls uridylylation state and activity of the PII proteins, and plays an important role in the regulation of nitrogen assimilation and metabolism.</text>
</comment>
<comment type="catalytic activity">
    <reaction evidence="1">
        <text>[protein-PII]-L-tyrosine + UTP = [protein-PII]-uridylyl-L-tyrosine + diphosphate</text>
        <dbReference type="Rhea" id="RHEA:13673"/>
        <dbReference type="Rhea" id="RHEA-COMP:12147"/>
        <dbReference type="Rhea" id="RHEA-COMP:12148"/>
        <dbReference type="ChEBI" id="CHEBI:33019"/>
        <dbReference type="ChEBI" id="CHEBI:46398"/>
        <dbReference type="ChEBI" id="CHEBI:46858"/>
        <dbReference type="ChEBI" id="CHEBI:90602"/>
        <dbReference type="EC" id="2.7.7.59"/>
    </reaction>
</comment>
<comment type="catalytic activity">
    <reaction evidence="1">
        <text>[protein-PII]-uridylyl-L-tyrosine + H2O = [protein-PII]-L-tyrosine + UMP + H(+)</text>
        <dbReference type="Rhea" id="RHEA:48600"/>
        <dbReference type="Rhea" id="RHEA-COMP:12147"/>
        <dbReference type="Rhea" id="RHEA-COMP:12148"/>
        <dbReference type="ChEBI" id="CHEBI:15377"/>
        <dbReference type="ChEBI" id="CHEBI:15378"/>
        <dbReference type="ChEBI" id="CHEBI:46858"/>
        <dbReference type="ChEBI" id="CHEBI:57865"/>
        <dbReference type="ChEBI" id="CHEBI:90602"/>
    </reaction>
</comment>
<comment type="cofactor">
    <cofactor evidence="1">
        <name>Mg(2+)</name>
        <dbReference type="ChEBI" id="CHEBI:18420"/>
    </cofactor>
</comment>
<comment type="activity regulation">
    <text evidence="1">Uridylyltransferase (UTase) activity is inhibited by glutamine, while glutamine activates uridylyl-removing (UR) activity.</text>
</comment>
<comment type="domain">
    <text evidence="1">Has four distinct domains: an N-terminal nucleotidyltransferase (NT) domain responsible for UTase activity, a central HD domain that encodes UR activity, and two C-terminal ACT domains that seem to have a role in glutamine sensing.</text>
</comment>
<comment type="similarity">
    <text evidence="1">Belongs to the GlnD family.</text>
</comment>
<keyword id="KW-0378">Hydrolase</keyword>
<keyword id="KW-0460">Magnesium</keyword>
<keyword id="KW-0511">Multifunctional enzyme</keyword>
<keyword id="KW-0548">Nucleotidyltransferase</keyword>
<keyword id="KW-1185">Reference proteome</keyword>
<keyword id="KW-0677">Repeat</keyword>
<keyword id="KW-0808">Transferase</keyword>
<gene>
    <name evidence="1" type="primary">glnD</name>
    <name type="ordered locus">BP1417</name>
</gene>
<accession>Q7VYD2</accession>
<sequence>MPHVDLNPLKQRMQAARAAAVAQFRQHPRPDMLLTELRRIVDQALRELVKLCPLPAGATLAAVGSYGRGELYPHSDVDLLILLPQPPSAADARAVEALVAALWDLGLEPGHSVRTLEDCEREARGDITVETALLESRWLAGSRTLMKRLDSAMQARLDAAVFFQAKRVEMQQRHAHYQDTPYALEPNCKESPGGLRDLQVILWMARAAGFGHSWREVAQAGLLTSSEARDLRRAEQAFKRLRIELHLLTGRREDRVLFDLQPGLAAVYGIASTATRRASELLMQRYYWAARLVTQLNVILVQNIEERLFPRPDSDARLIDDDFRNLRERLDIVREDGFERNPTLLLRAFLVMQQHPELIGMSARTLRAIWHSRHRIDAQFRRNPVNRKLFLQILQQPRGIVHELRRMTMLNILPRYLPVFRRIVGQMQHDLFHVYTVDQHTLAVVRNLRRFTMPEHAQEYPLASQLIAGLDRHWLLYVAALFHDIAKGRGGDHSELGAREVRRFAQDHGLDPTDAELVEFLVRHHLLMSAVAQKRDLSDPQVVRDFAAQVGDERRLAALYLLTVADIRGTSPRVWNAWKGKLLEDLFRLTLAALGGAHADAHTVLTERKDEAARLTRLAGLRDDAREAFWNQLDIAYFLRHDASEIAWHTRHLYYQVAPDEPVVRVRPTEHGEGLQVMVYTRDAPDLFVTTCGYFDAKSLSVQDARVHTTRHGWALDSFIVLAPEGFADLRAQATLVEHELAERLRDPHAARHAHAPRRLPHSHARRSRVFPVMPQAELSPDERSQSWRLSVTATDRPGLLYALARVFAEHGVDLIMAKIMTLGERVEDVFIVSGSALERPRSQMQFERAILDALAGDEPRQQAA</sequence>
<evidence type="ECO:0000255" key="1">
    <source>
        <dbReference type="HAMAP-Rule" id="MF_00277"/>
    </source>
</evidence>
<evidence type="ECO:0000255" key="2">
    <source>
        <dbReference type="PROSITE-ProRule" id="PRU01175"/>
    </source>
</evidence>
<evidence type="ECO:0000256" key="3">
    <source>
        <dbReference type="SAM" id="MobiDB-lite"/>
    </source>
</evidence>